<organism>
    <name type="scientific">Staphylococcus carnosus (strain TM300)</name>
    <dbReference type="NCBI Taxonomy" id="396513"/>
    <lineage>
        <taxon>Bacteria</taxon>
        <taxon>Bacillati</taxon>
        <taxon>Bacillota</taxon>
        <taxon>Bacilli</taxon>
        <taxon>Bacillales</taxon>
        <taxon>Staphylococcaceae</taxon>
        <taxon>Staphylococcus</taxon>
    </lineage>
</organism>
<evidence type="ECO:0000255" key="1">
    <source>
        <dbReference type="HAMAP-Rule" id="MF_00360"/>
    </source>
</evidence>
<evidence type="ECO:0000305" key="2"/>
<keyword id="KW-1185">Reference proteome</keyword>
<keyword id="KW-0687">Ribonucleoprotein</keyword>
<keyword id="KW-0689">Ribosomal protein</keyword>
<keyword id="KW-0694">RNA-binding</keyword>
<keyword id="KW-0699">rRNA-binding</keyword>
<sequence>MRTYEIMYVVRPNIEDEARKALVERFNGILTNDGAEIIEEKDWGKRRLAYEIEDFKEGYYYIVRINTENSEATDEFQRLAKINDDIIRYIVIREDEDK</sequence>
<name>RS6_STACT</name>
<proteinExistence type="inferred from homology"/>
<feature type="chain" id="PRO_1000133544" description="Small ribosomal subunit protein bS6">
    <location>
        <begin position="1"/>
        <end position="98"/>
    </location>
</feature>
<reference key="1">
    <citation type="journal article" date="2009" name="Appl. Environ. Microbiol.">
        <title>Genome analysis of the meat starter culture bacterium Staphylococcus carnosus TM300.</title>
        <authorList>
            <person name="Rosenstein R."/>
            <person name="Nerz C."/>
            <person name="Biswas L."/>
            <person name="Resch A."/>
            <person name="Raddatz G."/>
            <person name="Schuster S.C."/>
            <person name="Goetz F."/>
        </authorList>
    </citation>
    <scope>NUCLEOTIDE SEQUENCE [LARGE SCALE GENOMIC DNA]</scope>
    <source>
        <strain>TM300</strain>
    </source>
</reference>
<protein>
    <recommendedName>
        <fullName evidence="1">Small ribosomal subunit protein bS6</fullName>
    </recommendedName>
    <alternativeName>
        <fullName evidence="2">30S ribosomal protein S6</fullName>
    </alternativeName>
</protein>
<gene>
    <name evidence="1" type="primary">rpsF</name>
    <name type="ordered locus">Sca_0026</name>
</gene>
<comment type="function">
    <text evidence="1">Binds together with bS18 to 16S ribosomal RNA.</text>
</comment>
<comment type="similarity">
    <text evidence="1">Belongs to the bacterial ribosomal protein bS6 family.</text>
</comment>
<dbReference type="EMBL" id="AM295250">
    <property type="protein sequence ID" value="CAL26941.1"/>
    <property type="molecule type" value="Genomic_DNA"/>
</dbReference>
<dbReference type="RefSeq" id="WP_012664056.1">
    <property type="nucleotide sequence ID" value="NC_012121.1"/>
</dbReference>
<dbReference type="SMR" id="B9DIB8"/>
<dbReference type="GeneID" id="93794941"/>
<dbReference type="KEGG" id="sca:SCA_0026"/>
<dbReference type="eggNOG" id="COG0360">
    <property type="taxonomic scope" value="Bacteria"/>
</dbReference>
<dbReference type="HOGENOM" id="CLU_113441_5_3_9"/>
<dbReference type="OrthoDB" id="9812702at2"/>
<dbReference type="BioCyc" id="SCAR396513:SCA_RS00125-MONOMER"/>
<dbReference type="Proteomes" id="UP000000444">
    <property type="component" value="Chromosome"/>
</dbReference>
<dbReference type="GO" id="GO:0005737">
    <property type="term" value="C:cytoplasm"/>
    <property type="evidence" value="ECO:0007669"/>
    <property type="project" value="UniProtKB-ARBA"/>
</dbReference>
<dbReference type="GO" id="GO:1990904">
    <property type="term" value="C:ribonucleoprotein complex"/>
    <property type="evidence" value="ECO:0007669"/>
    <property type="project" value="UniProtKB-KW"/>
</dbReference>
<dbReference type="GO" id="GO:0005840">
    <property type="term" value="C:ribosome"/>
    <property type="evidence" value="ECO:0007669"/>
    <property type="project" value="UniProtKB-KW"/>
</dbReference>
<dbReference type="GO" id="GO:0070181">
    <property type="term" value="F:small ribosomal subunit rRNA binding"/>
    <property type="evidence" value="ECO:0007669"/>
    <property type="project" value="TreeGrafter"/>
</dbReference>
<dbReference type="GO" id="GO:0003735">
    <property type="term" value="F:structural constituent of ribosome"/>
    <property type="evidence" value="ECO:0007669"/>
    <property type="project" value="InterPro"/>
</dbReference>
<dbReference type="GO" id="GO:0006412">
    <property type="term" value="P:translation"/>
    <property type="evidence" value="ECO:0007669"/>
    <property type="project" value="UniProtKB-UniRule"/>
</dbReference>
<dbReference type="CDD" id="cd00473">
    <property type="entry name" value="bS6"/>
    <property type="match status" value="1"/>
</dbReference>
<dbReference type="FunFam" id="3.30.70.60:FF:000002">
    <property type="entry name" value="30S ribosomal protein S6"/>
    <property type="match status" value="1"/>
</dbReference>
<dbReference type="Gene3D" id="3.30.70.60">
    <property type="match status" value="1"/>
</dbReference>
<dbReference type="HAMAP" id="MF_00360">
    <property type="entry name" value="Ribosomal_bS6"/>
    <property type="match status" value="1"/>
</dbReference>
<dbReference type="InterPro" id="IPR000529">
    <property type="entry name" value="Ribosomal_bS6"/>
</dbReference>
<dbReference type="InterPro" id="IPR035980">
    <property type="entry name" value="Ribosomal_bS6_sf"/>
</dbReference>
<dbReference type="InterPro" id="IPR020814">
    <property type="entry name" value="Ribosomal_S6_plastid/chlpt"/>
</dbReference>
<dbReference type="InterPro" id="IPR014717">
    <property type="entry name" value="Transl_elong_EF1B/ribsomal_bS6"/>
</dbReference>
<dbReference type="NCBIfam" id="TIGR00166">
    <property type="entry name" value="S6"/>
    <property type="match status" value="1"/>
</dbReference>
<dbReference type="PANTHER" id="PTHR21011">
    <property type="entry name" value="MITOCHONDRIAL 28S RIBOSOMAL PROTEIN S6"/>
    <property type="match status" value="1"/>
</dbReference>
<dbReference type="PANTHER" id="PTHR21011:SF1">
    <property type="entry name" value="SMALL RIBOSOMAL SUBUNIT PROTEIN BS6M"/>
    <property type="match status" value="1"/>
</dbReference>
<dbReference type="Pfam" id="PF01250">
    <property type="entry name" value="Ribosomal_S6"/>
    <property type="match status" value="1"/>
</dbReference>
<dbReference type="SUPFAM" id="SSF54995">
    <property type="entry name" value="Ribosomal protein S6"/>
    <property type="match status" value="1"/>
</dbReference>
<accession>B9DIB8</accession>